<evidence type="ECO:0000255" key="1"/>
<evidence type="ECO:0000269" key="2">
    <source>
    </source>
</evidence>
<evidence type="ECO:0000269" key="3">
    <source>
    </source>
</evidence>
<evidence type="ECO:0000303" key="4">
    <source>
    </source>
</evidence>
<evidence type="ECO:0000305" key="5"/>
<evidence type="ECO:0000312" key="6">
    <source>
        <dbReference type="WormBase" id="F11E6.5"/>
    </source>
</evidence>
<dbReference type="EC" id="2.3.1.-" evidence="2"/>
<dbReference type="EMBL" id="BX284604">
    <property type="protein sequence ID" value="CAB02921.1"/>
    <property type="molecule type" value="Genomic_DNA"/>
</dbReference>
<dbReference type="PIR" id="T20786">
    <property type="entry name" value="T20786"/>
</dbReference>
<dbReference type="RefSeq" id="NP_503114.1">
    <property type="nucleotide sequence ID" value="NM_070713.9"/>
</dbReference>
<dbReference type="SMR" id="Q9XVQ9"/>
<dbReference type="DIP" id="DIP-26940N"/>
<dbReference type="FunCoup" id="Q9XVQ9">
    <property type="interactions" value="148"/>
</dbReference>
<dbReference type="STRING" id="6239.F11E6.5.1"/>
<dbReference type="SwissLipids" id="SLP:000000573"/>
<dbReference type="PaxDb" id="6239-F11E6.5"/>
<dbReference type="PeptideAtlas" id="Q9XVQ9"/>
<dbReference type="EnsemblMetazoa" id="F11E6.5.1">
    <property type="protein sequence ID" value="F11E6.5.1"/>
    <property type="gene ID" value="WBGene00001240"/>
</dbReference>
<dbReference type="GeneID" id="178532"/>
<dbReference type="KEGG" id="cel:CELE_F11E6.5"/>
<dbReference type="UCSC" id="F11E6.5.1">
    <property type="organism name" value="c. elegans"/>
</dbReference>
<dbReference type="AGR" id="WB:WBGene00001240"/>
<dbReference type="CTD" id="178532"/>
<dbReference type="WormBase" id="F11E6.5">
    <property type="protein sequence ID" value="CE19785"/>
    <property type="gene ID" value="WBGene00001240"/>
    <property type="gene designation" value="elo-2"/>
</dbReference>
<dbReference type="eggNOG" id="KOG3072">
    <property type="taxonomic scope" value="Eukaryota"/>
</dbReference>
<dbReference type="GeneTree" id="ENSGT01050000244965"/>
<dbReference type="HOGENOM" id="CLU_048483_1_0_1"/>
<dbReference type="InParanoid" id="Q9XVQ9"/>
<dbReference type="OMA" id="HQAWARW"/>
<dbReference type="OrthoDB" id="10259681at2759"/>
<dbReference type="PhylomeDB" id="Q9XVQ9"/>
<dbReference type="Reactome" id="R-CEL-2046105">
    <property type="pathway name" value="Linoleic acid (LA) metabolism"/>
</dbReference>
<dbReference type="Reactome" id="R-CEL-2046106">
    <property type="pathway name" value="alpha-linolenic acid (ALA) metabolism"/>
</dbReference>
<dbReference type="Reactome" id="R-CEL-75876">
    <property type="pathway name" value="Synthesis of very long-chain fatty acyl-CoAs"/>
</dbReference>
<dbReference type="UniPathway" id="UPA00094"/>
<dbReference type="PRO" id="PR:Q9XVQ9"/>
<dbReference type="Proteomes" id="UP000001940">
    <property type="component" value="Chromosome IV"/>
</dbReference>
<dbReference type="Bgee" id="WBGene00001240">
    <property type="expression patterns" value="Expressed in larva and 3 other cell types or tissues"/>
</dbReference>
<dbReference type="GO" id="GO:0005789">
    <property type="term" value="C:endoplasmic reticulum membrane"/>
    <property type="evidence" value="ECO:0000318"/>
    <property type="project" value="GO_Central"/>
</dbReference>
<dbReference type="GO" id="GO:0009922">
    <property type="term" value="F:fatty acid elongase activity"/>
    <property type="evidence" value="ECO:0000318"/>
    <property type="project" value="GO_Central"/>
</dbReference>
<dbReference type="GO" id="GO:0008340">
    <property type="term" value="P:determination of adult lifespan"/>
    <property type="evidence" value="ECO:0000315"/>
    <property type="project" value="WormBase"/>
</dbReference>
<dbReference type="GO" id="GO:0034625">
    <property type="term" value="P:fatty acid elongation, monounsaturated fatty acid"/>
    <property type="evidence" value="ECO:0000318"/>
    <property type="project" value="GO_Central"/>
</dbReference>
<dbReference type="GO" id="GO:0034626">
    <property type="term" value="P:fatty acid elongation, polyunsaturated fatty acid"/>
    <property type="evidence" value="ECO:0000318"/>
    <property type="project" value="GO_Central"/>
</dbReference>
<dbReference type="GO" id="GO:0019367">
    <property type="term" value="P:fatty acid elongation, saturated fatty acid"/>
    <property type="evidence" value="ECO:0000318"/>
    <property type="project" value="GO_Central"/>
</dbReference>
<dbReference type="GO" id="GO:0006629">
    <property type="term" value="P:lipid metabolic process"/>
    <property type="evidence" value="ECO:0000315"/>
    <property type="project" value="WormBase"/>
</dbReference>
<dbReference type="GO" id="GO:0035264">
    <property type="term" value="P:multicellular organism growth"/>
    <property type="evidence" value="ECO:0000315"/>
    <property type="project" value="WormBase"/>
</dbReference>
<dbReference type="GO" id="GO:0010468">
    <property type="term" value="P:regulation of gene expression"/>
    <property type="evidence" value="ECO:0000315"/>
    <property type="project" value="WormBase"/>
</dbReference>
<dbReference type="GO" id="GO:0022414">
    <property type="term" value="P:reproductive process"/>
    <property type="evidence" value="ECO:0000315"/>
    <property type="project" value="WormBase"/>
</dbReference>
<dbReference type="GO" id="GO:0030148">
    <property type="term" value="P:sphingolipid biosynthetic process"/>
    <property type="evidence" value="ECO:0000318"/>
    <property type="project" value="GO_Central"/>
</dbReference>
<dbReference type="GO" id="GO:0042761">
    <property type="term" value="P:very long-chain fatty acid biosynthetic process"/>
    <property type="evidence" value="ECO:0000318"/>
    <property type="project" value="GO_Central"/>
</dbReference>
<dbReference type="InterPro" id="IPR002076">
    <property type="entry name" value="ELO_fam"/>
</dbReference>
<dbReference type="PANTHER" id="PTHR11157:SF30">
    <property type="entry name" value="ELONGATION OF LONG CHAIN FATTY ACIDS PROTEIN 2"/>
    <property type="match status" value="1"/>
</dbReference>
<dbReference type="PANTHER" id="PTHR11157">
    <property type="entry name" value="FATTY ACID ACYL TRANSFERASE-RELATED"/>
    <property type="match status" value="1"/>
</dbReference>
<dbReference type="Pfam" id="PF01151">
    <property type="entry name" value="ELO"/>
    <property type="match status" value="1"/>
</dbReference>
<sequence length="274" mass="31361">MAAAQTSPAATLVDVLTKPWSLDQTDSYMSTFVPLSYKIMIGYLVTIYFGQKLMAHRKPFDLQNTLALWNFGFSLFSGIAAYKLIPELFGVFMKDGFVASYCQNENYYTDASTGFWGWAFVMSKAPELGDTMFLVLRKKPVIFMHWYHHALTFVYAVVTYSEHQAWARWSLALNLAVHTVMYFYFAVRALNIQTPRPVAKFITTIQIVQFVISCYIFGHLVFIKSADSVPGCAVSWNVLSIGGLMYISYLFLFAKFFYKAYIQKRSPTKTSKQE</sequence>
<proteinExistence type="evidence at protein level"/>
<accession>Q9XVQ9</accession>
<comment type="function">
    <text evidence="2 3">Catalyzes the first and rate-limiting reaction of the four reactions that constitute the long-chain fatty acids elongation cycle. Uses malonyl-CoA to add 2 carbons per cycle to the chain of long-chain fatty acids. Condensing enzyme responsible for the elongation of palmitate (hexadecanoate, 16:0), also involved in polyunsaturated fatty acid (PUFA) biosynthesis.</text>
</comment>
<comment type="catalytic activity">
    <reaction evidence="2">
        <text>hexadecanoyl-CoA + malonyl-CoA + H(+) = 3-oxooctadecanoyl-CoA + CO2 + CoA</text>
        <dbReference type="Rhea" id="RHEA:35315"/>
        <dbReference type="ChEBI" id="CHEBI:15378"/>
        <dbReference type="ChEBI" id="CHEBI:16526"/>
        <dbReference type="ChEBI" id="CHEBI:57287"/>
        <dbReference type="ChEBI" id="CHEBI:57379"/>
        <dbReference type="ChEBI" id="CHEBI:57384"/>
        <dbReference type="ChEBI" id="CHEBI:71407"/>
    </reaction>
    <physiologicalReaction direction="left-to-right" evidence="2">
        <dbReference type="Rhea" id="RHEA:35316"/>
    </physiologicalReaction>
</comment>
<comment type="pathway">
    <text evidence="2">Lipid metabolism; fatty acid biosynthesis.</text>
</comment>
<comment type="subcellular location">
    <subcellularLocation>
        <location evidence="1">Membrane</location>
        <topology evidence="1">Multi-pass membrane protein</topology>
    </subcellularLocation>
</comment>
<comment type="tissue specificity">
    <text evidence="2">Expressed in various tissues and parts of the body, including the ventral cord, pharyngeal muscles, uterus, and the tail, and most strongly in intestinal cells.</text>
</comment>
<comment type="disruption phenotype">
    <text evidence="2 3">Suppression of ELO-2 causes an accumulation of palmitate and an associated decrease in the PUFA fraction in triacylglycerides and phospholipid classes. This imbalance in the fatty acid composition results in multiple phenotypic defects such as slow growth, small body size, reproductive defects, and changes in rhythmic behavior (PubMed:12586704). Suppression of ELO-2 decreases growth rate and reduces brood size (PubMed:32961767).</text>
</comment>
<comment type="similarity">
    <text evidence="5">Belongs to the ELO family.</text>
</comment>
<name>ELO2_CAEEL</name>
<keyword id="KW-0275">Fatty acid biosynthesis</keyword>
<keyword id="KW-0276">Fatty acid metabolism</keyword>
<keyword id="KW-0444">Lipid biosynthesis</keyword>
<keyword id="KW-0443">Lipid metabolism</keyword>
<keyword id="KW-0472">Membrane</keyword>
<keyword id="KW-1185">Reference proteome</keyword>
<keyword id="KW-0808">Transferase</keyword>
<keyword id="KW-0812">Transmembrane</keyword>
<keyword id="KW-1133">Transmembrane helix</keyword>
<reference key="1">
    <citation type="journal article" date="1998" name="Science">
        <title>Genome sequence of the nematode C. elegans: a platform for investigating biology.</title>
        <authorList>
            <consortium name="The C. elegans sequencing consortium"/>
        </authorList>
    </citation>
    <scope>NUCLEOTIDE SEQUENCE [LARGE SCALE GENOMIC DNA]</scope>
    <source>
        <strain>Bristol N2</strain>
    </source>
</reference>
<reference key="2">
    <citation type="journal article" date="2003" name="Genetics">
        <title>Suppression of the ELO-2 FA elongation activity results in alterations of the fatty acid composition and multiple physiological defects, including abnormal ultradian rhythms, in Caenorhabditis elegans.</title>
        <authorList>
            <person name="Kniazeva M."/>
            <person name="Sieber M."/>
            <person name="McCauley S."/>
            <person name="Zhang K."/>
            <person name="Watts J.L."/>
            <person name="Han M."/>
        </authorList>
    </citation>
    <scope>FUNCTION</scope>
    <scope>CATALYTIC ACTIVITY</scope>
    <scope>PATHWAY</scope>
    <scope>TISSUE SPECIFICITY</scope>
    <scope>DISRUPTION PHENOTYPE</scope>
</reference>
<reference key="3">
    <citation type="journal article" date="2020" name="Cells">
        <title>Juniperonic Acid Biosynthesis is Essential in Caenorhabditis Elegans Lacking Delta6 Desaturase (fat-3) and Generates New omega-3 Endocannabinoids.</title>
        <authorList>
            <person name="Guha S."/>
            <person name="Calarco S."/>
            <person name="Gachet M.S."/>
            <person name="Gertsch J."/>
        </authorList>
    </citation>
    <scope>FUNCTION</scope>
    <scope>DISRUPTION PHENOTYPE</scope>
</reference>
<organism>
    <name type="scientific">Caenorhabditis elegans</name>
    <dbReference type="NCBI Taxonomy" id="6239"/>
    <lineage>
        <taxon>Eukaryota</taxon>
        <taxon>Metazoa</taxon>
        <taxon>Ecdysozoa</taxon>
        <taxon>Nematoda</taxon>
        <taxon>Chromadorea</taxon>
        <taxon>Rhabditida</taxon>
        <taxon>Rhabditina</taxon>
        <taxon>Rhabditomorpha</taxon>
        <taxon>Rhabditoidea</taxon>
        <taxon>Rhabditidae</taxon>
        <taxon>Peloderinae</taxon>
        <taxon>Caenorhabditis</taxon>
    </lineage>
</organism>
<feature type="chain" id="PRO_0000452611" description="Long chain fatty acid elongase 2">
    <location>
        <begin position="1"/>
        <end position="274"/>
    </location>
</feature>
<feature type="transmembrane region" description="Helical" evidence="1">
    <location>
        <begin position="29"/>
        <end position="49"/>
    </location>
</feature>
<feature type="transmembrane region" description="Helical" evidence="1">
    <location>
        <begin position="73"/>
        <end position="93"/>
    </location>
</feature>
<feature type="transmembrane region" description="Helical" evidence="1">
    <location>
        <begin position="115"/>
        <end position="135"/>
    </location>
</feature>
<feature type="transmembrane region" description="Helical" evidence="1">
    <location>
        <begin position="140"/>
        <end position="160"/>
    </location>
</feature>
<feature type="transmembrane region" description="Helical" evidence="1">
    <location>
        <begin position="170"/>
        <end position="190"/>
    </location>
</feature>
<feature type="transmembrane region" description="Helical" evidence="1">
    <location>
        <begin position="201"/>
        <end position="221"/>
    </location>
</feature>
<feature type="transmembrane region" description="Helical" evidence="1">
    <location>
        <begin position="238"/>
        <end position="258"/>
    </location>
</feature>
<protein>
    <recommendedName>
        <fullName evidence="5">Long chain fatty acid elongase 2</fullName>
        <shortName evidence="4">ELO-2</shortName>
        <ecNumber evidence="2">2.3.1.-</ecNumber>
    </recommendedName>
    <alternativeName>
        <fullName>Elongation of long chain fatty acids protein 2</fullName>
    </alternativeName>
    <alternativeName>
        <fullName evidence="4">F11E6.5/ELO-2</fullName>
    </alternativeName>
    <alternativeName>
        <fullName>Long-chain 3-oxoacyl-CoA synthase 2</fullName>
        <shortName>CEELO2</shortName>
    </alternativeName>
</protein>
<gene>
    <name evidence="4 6" type="primary">elo-2</name>
    <name evidence="6" type="ORF">F11E6.5</name>
</gene>